<gene>
    <name type="primary">Ggps1</name>
</gene>
<feature type="chain" id="PRO_0000123964" description="Geranylgeranyl pyrophosphate synthase">
    <location>
        <begin position="1"/>
        <end position="300"/>
    </location>
</feature>
<feature type="binding site" evidence="3">
    <location>
        <position position="25"/>
    </location>
    <ligand>
        <name>isopentenyl diphosphate</name>
        <dbReference type="ChEBI" id="CHEBI:128769"/>
    </ligand>
</feature>
<feature type="binding site" evidence="3">
    <location>
        <position position="28"/>
    </location>
    <ligand>
        <name>isopentenyl diphosphate</name>
        <dbReference type="ChEBI" id="CHEBI:128769"/>
    </ligand>
</feature>
<feature type="binding site" evidence="4">
    <location>
        <position position="57"/>
    </location>
    <ligand>
        <name>isopentenyl diphosphate</name>
        <dbReference type="ChEBI" id="CHEBI:128769"/>
    </ligand>
</feature>
<feature type="binding site" evidence="3">
    <location>
        <position position="64"/>
    </location>
    <ligand>
        <name>Mg(2+)</name>
        <dbReference type="ChEBI" id="CHEBI:18420"/>
        <label>1</label>
    </ligand>
</feature>
<feature type="binding site" evidence="3">
    <location>
        <position position="64"/>
    </location>
    <ligand>
        <name>Mg(2+)</name>
        <dbReference type="ChEBI" id="CHEBI:18420"/>
        <label>2</label>
    </ligand>
</feature>
<feature type="binding site" evidence="3">
    <location>
        <position position="68"/>
    </location>
    <ligand>
        <name>Mg(2+)</name>
        <dbReference type="ChEBI" id="CHEBI:18420"/>
        <label>1</label>
    </ligand>
</feature>
<feature type="binding site" evidence="3">
    <location>
        <position position="68"/>
    </location>
    <ligand>
        <name>Mg(2+)</name>
        <dbReference type="ChEBI" id="CHEBI:18420"/>
        <label>2</label>
    </ligand>
</feature>
<feature type="binding site" evidence="1">
    <location>
        <position position="73"/>
    </location>
    <ligand>
        <name>dimethylallyl diphosphate</name>
        <dbReference type="ChEBI" id="CHEBI:57623"/>
    </ligand>
</feature>
<feature type="binding site" evidence="3">
    <location>
        <position position="74"/>
    </location>
    <ligand>
        <name>isopentenyl diphosphate</name>
        <dbReference type="ChEBI" id="CHEBI:128769"/>
    </ligand>
</feature>
<feature type="binding site" evidence="1">
    <location>
        <position position="151"/>
    </location>
    <ligand>
        <name>dimethylallyl diphosphate</name>
        <dbReference type="ChEBI" id="CHEBI:57623"/>
    </ligand>
</feature>
<feature type="binding site" evidence="1">
    <location>
        <position position="152"/>
    </location>
    <ligand>
        <name>dimethylallyl diphosphate</name>
        <dbReference type="ChEBI" id="CHEBI:57623"/>
    </ligand>
</feature>
<feature type="binding site" evidence="1">
    <location>
        <position position="185"/>
    </location>
    <ligand>
        <name>dimethylallyl diphosphate</name>
        <dbReference type="ChEBI" id="CHEBI:57623"/>
    </ligand>
</feature>
<feature type="binding site" evidence="1">
    <location>
        <position position="202"/>
    </location>
    <ligand>
        <name>dimethylallyl diphosphate</name>
        <dbReference type="ChEBI" id="CHEBI:57623"/>
    </ligand>
</feature>
<feature type="binding site" evidence="1">
    <location>
        <position position="212"/>
    </location>
    <ligand>
        <name>dimethylallyl diphosphate</name>
        <dbReference type="ChEBI" id="CHEBI:57623"/>
    </ligand>
</feature>
<feature type="modified residue" description="N-acetylmethionine" evidence="2">
    <location>
        <position position="1"/>
    </location>
</feature>
<accession>Q6F596</accession>
<name>GGPPS_RAT</name>
<keyword id="KW-0007">Acetylation</keyword>
<keyword id="KW-0963">Cytoplasm</keyword>
<keyword id="KW-0414">Isoprene biosynthesis</keyword>
<keyword id="KW-0443">Lipid metabolism</keyword>
<keyword id="KW-0460">Magnesium</keyword>
<keyword id="KW-0479">Metal-binding</keyword>
<keyword id="KW-1185">Reference proteome</keyword>
<keyword id="KW-0808">Transferase</keyword>
<organism>
    <name type="scientific">Rattus norvegicus</name>
    <name type="common">Rat</name>
    <dbReference type="NCBI Taxonomy" id="10116"/>
    <lineage>
        <taxon>Eukaryota</taxon>
        <taxon>Metazoa</taxon>
        <taxon>Chordata</taxon>
        <taxon>Craniata</taxon>
        <taxon>Vertebrata</taxon>
        <taxon>Euteleostomi</taxon>
        <taxon>Mammalia</taxon>
        <taxon>Eutheria</taxon>
        <taxon>Euarchontoglires</taxon>
        <taxon>Glires</taxon>
        <taxon>Rodentia</taxon>
        <taxon>Myomorpha</taxon>
        <taxon>Muroidea</taxon>
        <taxon>Muridae</taxon>
        <taxon>Murinae</taxon>
        <taxon>Rattus</taxon>
    </lineage>
</organism>
<proteinExistence type="evidence at transcript level"/>
<comment type="function">
    <text evidence="2">Catalyzes the trans-addition of the three molecules of IPP onto DMAPP to form geranylgeranyl pyrophosphate, an important precursor of carotenoids and geranylated proteins.</text>
</comment>
<comment type="catalytic activity">
    <reaction>
        <text>isopentenyl diphosphate + dimethylallyl diphosphate = (2E)-geranyl diphosphate + diphosphate</text>
        <dbReference type="Rhea" id="RHEA:22408"/>
        <dbReference type="ChEBI" id="CHEBI:33019"/>
        <dbReference type="ChEBI" id="CHEBI:57623"/>
        <dbReference type="ChEBI" id="CHEBI:58057"/>
        <dbReference type="ChEBI" id="CHEBI:128769"/>
        <dbReference type="EC" id="2.5.1.1"/>
    </reaction>
</comment>
<comment type="catalytic activity">
    <reaction>
        <text>isopentenyl diphosphate + (2E)-geranyl diphosphate = (2E,6E)-farnesyl diphosphate + diphosphate</text>
        <dbReference type="Rhea" id="RHEA:19361"/>
        <dbReference type="ChEBI" id="CHEBI:33019"/>
        <dbReference type="ChEBI" id="CHEBI:58057"/>
        <dbReference type="ChEBI" id="CHEBI:128769"/>
        <dbReference type="ChEBI" id="CHEBI:175763"/>
        <dbReference type="EC" id="2.5.1.10"/>
    </reaction>
</comment>
<comment type="catalytic activity">
    <reaction>
        <text>isopentenyl diphosphate + (2E,6E)-farnesyl diphosphate = (2E,6E,10E)-geranylgeranyl diphosphate + diphosphate</text>
        <dbReference type="Rhea" id="RHEA:17653"/>
        <dbReference type="ChEBI" id="CHEBI:33019"/>
        <dbReference type="ChEBI" id="CHEBI:58756"/>
        <dbReference type="ChEBI" id="CHEBI:128769"/>
        <dbReference type="ChEBI" id="CHEBI:175763"/>
        <dbReference type="EC" id="2.5.1.29"/>
    </reaction>
</comment>
<comment type="cofactor">
    <cofactor evidence="1">
        <name>Mg(2+)</name>
        <dbReference type="ChEBI" id="CHEBI:18420"/>
    </cofactor>
    <text evidence="1">Binds 2 Mg(2+) ions per subunit.</text>
</comment>
<comment type="pathway">
    <text>Isoprenoid biosynthesis; farnesyl diphosphate biosynthesis; farnesyl diphosphate from geranyl diphosphate and isopentenyl diphosphate: step 1/1.</text>
</comment>
<comment type="pathway">
    <text>Isoprenoid biosynthesis; geranyl diphosphate biosynthesis; geranyl diphosphate from dimethylallyl diphosphate and isopentenyl diphosphate: step 1/1.</text>
</comment>
<comment type="pathway">
    <text>Isoprenoid biosynthesis; geranylgeranyl diphosphate biosynthesis; geranylgeranyl diphosphate from farnesyl diphosphate and isopentenyl diphosphate: step 1/1.</text>
</comment>
<comment type="subunit">
    <text evidence="1">Homohexamer; trimer of homodimers.</text>
</comment>
<comment type="subcellular location">
    <subcellularLocation>
        <location evidence="5">Cytoplasm</location>
    </subcellularLocation>
    <subcellularLocation>
        <location evidence="2">Cytoplasm</location>
        <location evidence="2">Perinuclear region</location>
    </subcellularLocation>
    <subcellularLocation>
        <location evidence="2">Cytoplasm</location>
        <location evidence="2">Myofibril</location>
        <location evidence="2">Sarcomere</location>
        <location evidence="2">Z line</location>
    </subcellularLocation>
</comment>
<comment type="similarity">
    <text evidence="5">Belongs to the FPP/GGPP synthase family.</text>
</comment>
<evidence type="ECO:0000250" key="1"/>
<evidence type="ECO:0000250" key="2">
    <source>
        <dbReference type="UniProtKB" id="O95749"/>
    </source>
</evidence>
<evidence type="ECO:0000250" key="3">
    <source>
        <dbReference type="UniProtKB" id="P14324"/>
    </source>
</evidence>
<evidence type="ECO:0000250" key="4">
    <source>
        <dbReference type="UniProtKB" id="Q12051"/>
    </source>
</evidence>
<evidence type="ECO:0000305" key="5"/>
<protein>
    <recommendedName>
        <fullName>Geranylgeranyl pyrophosphate synthase</fullName>
        <shortName>GGPP synthase</shortName>
        <shortName>GGPPSase</shortName>
        <ecNumber>2.5.1.-</ecNumber>
    </recommendedName>
    <alternativeName>
        <fullName>(2E,6E)-farnesyl diphosphate synthase</fullName>
    </alternativeName>
    <alternativeName>
        <fullName>Dimethylallyltranstransferase</fullName>
        <ecNumber>2.5.1.1</ecNumber>
    </alternativeName>
    <alternativeName>
        <fullName>Farnesyl diphosphate synthase</fullName>
    </alternativeName>
    <alternativeName>
        <fullName>Farnesyltranstransferase</fullName>
        <ecNumber>2.5.1.29</ecNumber>
    </alternativeName>
    <alternativeName>
        <fullName>Geranylgeranyl diphosphate synthase</fullName>
    </alternativeName>
    <alternativeName>
        <fullName>Geranyltranstransferase</fullName>
        <ecNumber>2.5.1.10</ecNumber>
    </alternativeName>
</protein>
<sequence>MEKTKEKAERILLEPYKYLLQLPGKQVRTKLSQAFNHWLKVPEDKLQIIIEVTEMLHNASLLIDDIEDSSKLRRGFPVAHSIYGVPSVINSANYVYFLGLEKVLTLDHPDAVKLFTRQLLELHQGQGLDIYWRDTYTCPTEEEYKAMVLQKTGGLFGLAVGLMQLFSDYKEDLKPLLDTLGLFFQIRDDYANLHSKEYSENKSFCEDLTEGKFSFPTIHAIWSRPESTQVQNILRQRTENIDIKKYCVQYLEDVGSFEYTRYTLRELEAKAYKQIEACGGNPSLVALVKHLSKMFTEENE</sequence>
<dbReference type="EC" id="2.5.1.-"/>
<dbReference type="EC" id="2.5.1.1"/>
<dbReference type="EC" id="2.5.1.29"/>
<dbReference type="EC" id="2.5.1.10"/>
<dbReference type="EMBL" id="AB118237">
    <property type="protein sequence ID" value="BAD30051.1"/>
    <property type="molecule type" value="Genomic_DNA"/>
</dbReference>
<dbReference type="EMBL" id="AB118238">
    <property type="protein sequence ID" value="BAD30052.1"/>
    <property type="molecule type" value="mRNA"/>
</dbReference>
<dbReference type="EMBL" id="AB118239">
    <property type="protein sequence ID" value="BAD30053.1"/>
    <property type="molecule type" value="mRNA"/>
</dbReference>
<dbReference type="EMBL" id="AB118240">
    <property type="protein sequence ID" value="BAD30054.1"/>
    <property type="molecule type" value="mRNA"/>
</dbReference>
<dbReference type="EMBL" id="BC090327">
    <property type="protein sequence ID" value="AAH90327.1"/>
    <property type="molecule type" value="mRNA"/>
</dbReference>
<dbReference type="RefSeq" id="NP_001007627.1">
    <property type="nucleotide sequence ID" value="NM_001007626.4"/>
</dbReference>
<dbReference type="RefSeq" id="XP_038951449.1">
    <property type="nucleotide sequence ID" value="XM_039095521.2"/>
</dbReference>
<dbReference type="RefSeq" id="XP_038951450.1">
    <property type="nucleotide sequence ID" value="XM_039095522.2"/>
</dbReference>
<dbReference type="SMR" id="Q6F596"/>
<dbReference type="FunCoup" id="Q6F596">
    <property type="interactions" value="3025"/>
</dbReference>
<dbReference type="STRING" id="10116.ENSRNOP00000073229"/>
<dbReference type="iPTMnet" id="Q6F596"/>
<dbReference type="PhosphoSitePlus" id="Q6F596"/>
<dbReference type="PaxDb" id="10116-ENSRNOP00000022483"/>
<dbReference type="Ensembl" id="ENSRNOT00000022483.6">
    <property type="protein sequence ID" value="ENSRNOP00000022483.4"/>
    <property type="gene ID" value="ENSRNOG00000016767.7"/>
</dbReference>
<dbReference type="GeneID" id="291211"/>
<dbReference type="KEGG" id="rno:291211"/>
<dbReference type="UCSC" id="RGD:1359680">
    <property type="organism name" value="rat"/>
</dbReference>
<dbReference type="AGR" id="RGD:1359680"/>
<dbReference type="CTD" id="9453"/>
<dbReference type="RGD" id="1359680">
    <property type="gene designation" value="Ggps1"/>
</dbReference>
<dbReference type="eggNOG" id="KOG0777">
    <property type="taxonomic scope" value="Eukaryota"/>
</dbReference>
<dbReference type="GeneTree" id="ENSGT00940000153498"/>
<dbReference type="InParanoid" id="Q6F596"/>
<dbReference type="OMA" id="FYSKAFF"/>
<dbReference type="OrthoDB" id="6921389at2759"/>
<dbReference type="PhylomeDB" id="Q6F596"/>
<dbReference type="TreeFam" id="TF300101"/>
<dbReference type="BRENDA" id="2.5.1.29">
    <property type="organism ID" value="5301"/>
</dbReference>
<dbReference type="Reactome" id="R-RNO-191273">
    <property type="pathway name" value="Cholesterol biosynthesis"/>
</dbReference>
<dbReference type="UniPathway" id="UPA00259">
    <property type="reaction ID" value="UER00368"/>
</dbReference>
<dbReference type="UniPathway" id="UPA00260">
    <property type="reaction ID" value="UER00369"/>
</dbReference>
<dbReference type="UniPathway" id="UPA00389">
    <property type="reaction ID" value="UER00564"/>
</dbReference>
<dbReference type="PRO" id="PR:Q6F596"/>
<dbReference type="Proteomes" id="UP000002494">
    <property type="component" value="Chromosome 17"/>
</dbReference>
<dbReference type="Bgee" id="ENSRNOG00000016767">
    <property type="expression patterns" value="Expressed in thymus and 19 other cell types or tissues"/>
</dbReference>
<dbReference type="ExpressionAtlas" id="Q6F596">
    <property type="expression patterns" value="baseline and differential"/>
</dbReference>
<dbReference type="GO" id="GO:0005737">
    <property type="term" value="C:cytoplasm"/>
    <property type="evidence" value="ECO:0000250"/>
    <property type="project" value="UniProtKB"/>
</dbReference>
<dbReference type="GO" id="GO:0048471">
    <property type="term" value="C:perinuclear region of cytoplasm"/>
    <property type="evidence" value="ECO:0000250"/>
    <property type="project" value="UniProtKB"/>
</dbReference>
<dbReference type="GO" id="GO:0030018">
    <property type="term" value="C:Z disc"/>
    <property type="evidence" value="ECO:0000250"/>
    <property type="project" value="UniProtKB"/>
</dbReference>
<dbReference type="GO" id="GO:0004337">
    <property type="term" value="F:(2E,6E)-farnesyl diphosphate synthase activity"/>
    <property type="evidence" value="ECO:0000266"/>
    <property type="project" value="RGD"/>
</dbReference>
<dbReference type="GO" id="GO:0004161">
    <property type="term" value="F:dimethylallyltranstransferase activity"/>
    <property type="evidence" value="ECO:0007669"/>
    <property type="project" value="UniProtKB-EC"/>
</dbReference>
<dbReference type="GO" id="GO:0004311">
    <property type="term" value="F:geranylgeranyl diphosphate synthase activity"/>
    <property type="evidence" value="ECO:0000250"/>
    <property type="project" value="UniProtKB"/>
</dbReference>
<dbReference type="GO" id="GO:0042802">
    <property type="term" value="F:identical protein binding"/>
    <property type="evidence" value="ECO:0000266"/>
    <property type="project" value="RGD"/>
</dbReference>
<dbReference type="GO" id="GO:0046872">
    <property type="term" value="F:metal ion binding"/>
    <property type="evidence" value="ECO:0007669"/>
    <property type="project" value="UniProtKB-KW"/>
</dbReference>
<dbReference type="GO" id="GO:0045337">
    <property type="term" value="P:farnesyl diphosphate biosynthetic process"/>
    <property type="evidence" value="ECO:0007669"/>
    <property type="project" value="UniProtKB-UniPathway"/>
</dbReference>
<dbReference type="GO" id="GO:0033384">
    <property type="term" value="P:geranyl diphosphate biosynthetic process"/>
    <property type="evidence" value="ECO:0007669"/>
    <property type="project" value="UniProtKB-UniPathway"/>
</dbReference>
<dbReference type="GO" id="GO:0033386">
    <property type="term" value="P:geranylgeranyl diphosphate biosynthetic process"/>
    <property type="evidence" value="ECO:0007669"/>
    <property type="project" value="UniProtKB-UniPathway"/>
</dbReference>
<dbReference type="GO" id="GO:0008299">
    <property type="term" value="P:isoprenoid biosynthetic process"/>
    <property type="evidence" value="ECO:0000318"/>
    <property type="project" value="GO_Central"/>
</dbReference>
<dbReference type="GO" id="GO:0006720">
    <property type="term" value="P:isoprenoid metabolic process"/>
    <property type="evidence" value="ECO:0000250"/>
    <property type="project" value="UniProtKB"/>
</dbReference>
<dbReference type="CDD" id="cd00685">
    <property type="entry name" value="Trans_IPPS_HT"/>
    <property type="match status" value="1"/>
</dbReference>
<dbReference type="FunFam" id="1.10.600.10:FF:000009">
    <property type="entry name" value="Geranylgeranyl pyrophosphate synthase"/>
    <property type="match status" value="1"/>
</dbReference>
<dbReference type="Gene3D" id="1.10.600.10">
    <property type="entry name" value="Farnesyl Diphosphate Synthase"/>
    <property type="match status" value="1"/>
</dbReference>
<dbReference type="InterPro" id="IPR008949">
    <property type="entry name" value="Isoprenoid_synthase_dom_sf"/>
</dbReference>
<dbReference type="InterPro" id="IPR000092">
    <property type="entry name" value="Polyprenyl_synt"/>
</dbReference>
<dbReference type="InterPro" id="IPR033749">
    <property type="entry name" value="Polyprenyl_synt_CS"/>
</dbReference>
<dbReference type="PANTHER" id="PTHR12001">
    <property type="entry name" value="GERANYLGERANYL PYROPHOSPHATE SYNTHASE"/>
    <property type="match status" value="1"/>
</dbReference>
<dbReference type="PANTHER" id="PTHR12001:SF44">
    <property type="entry name" value="GERANYLGERANYL PYROPHOSPHATE SYNTHASE"/>
    <property type="match status" value="1"/>
</dbReference>
<dbReference type="Pfam" id="PF00348">
    <property type="entry name" value="polyprenyl_synt"/>
    <property type="match status" value="1"/>
</dbReference>
<dbReference type="SFLD" id="SFLDS00005">
    <property type="entry name" value="Isoprenoid_Synthase_Type_I"/>
    <property type="match status" value="1"/>
</dbReference>
<dbReference type="SFLD" id="SFLDG01017">
    <property type="entry name" value="Polyprenyl_Transferase_Like"/>
    <property type="match status" value="1"/>
</dbReference>
<dbReference type="SUPFAM" id="SSF48576">
    <property type="entry name" value="Terpenoid synthases"/>
    <property type="match status" value="1"/>
</dbReference>
<dbReference type="PROSITE" id="PS00723">
    <property type="entry name" value="POLYPRENYL_SYNTHASE_1"/>
    <property type="match status" value="1"/>
</dbReference>
<dbReference type="PROSITE" id="PS00444">
    <property type="entry name" value="POLYPRENYL_SYNTHASE_2"/>
    <property type="match status" value="1"/>
</dbReference>
<reference key="1">
    <citation type="journal article" date="2004" name="J. Biochem.">
        <title>Relationship between intron 4b splicing of the rat geranylgeranyl diphosphate synthase gene and the active enzyme expression level.</title>
        <authorList>
            <person name="Matsumura Y."/>
            <person name="Kuzuguchi T."/>
            <person name="Sagami H."/>
        </authorList>
    </citation>
    <scope>NUCLEOTIDE SEQUENCE [GENOMIC DNA / MRNA]</scope>
    <source>
        <tissue>Testis</tissue>
    </source>
</reference>
<reference key="2">
    <citation type="journal article" date="2004" name="Genome Res.">
        <title>The status, quality, and expansion of the NIH full-length cDNA project: the Mammalian Gene Collection (MGC).</title>
        <authorList>
            <consortium name="The MGC Project Team"/>
        </authorList>
    </citation>
    <scope>NUCLEOTIDE SEQUENCE [LARGE SCALE MRNA]</scope>
    <source>
        <tissue>Lung</tissue>
    </source>
</reference>